<organism>
    <name type="scientific">Ruegeria pomeroyi (strain ATCC 700808 / DSM 15171 / DSS-3)</name>
    <name type="common">Silicibacter pomeroyi</name>
    <dbReference type="NCBI Taxonomy" id="246200"/>
    <lineage>
        <taxon>Bacteria</taxon>
        <taxon>Pseudomonadati</taxon>
        <taxon>Pseudomonadota</taxon>
        <taxon>Alphaproteobacteria</taxon>
        <taxon>Rhodobacterales</taxon>
        <taxon>Roseobacteraceae</taxon>
        <taxon>Ruegeria</taxon>
    </lineage>
</organism>
<dbReference type="EMBL" id="CP000031">
    <property type="protein sequence ID" value="AAV93392.1"/>
    <property type="molecule type" value="Genomic_DNA"/>
</dbReference>
<dbReference type="RefSeq" id="WP_011045834.1">
    <property type="nucleotide sequence ID" value="NC_003911.12"/>
</dbReference>
<dbReference type="SMR" id="Q5LWL4"/>
<dbReference type="STRING" id="246200.SPO0061"/>
<dbReference type="PaxDb" id="246200-SPO0061"/>
<dbReference type="KEGG" id="sil:SPO0061"/>
<dbReference type="eggNOG" id="COG0532">
    <property type="taxonomic scope" value="Bacteria"/>
</dbReference>
<dbReference type="HOGENOM" id="CLU_006301_10_1_5"/>
<dbReference type="OrthoDB" id="9811804at2"/>
<dbReference type="Proteomes" id="UP000001023">
    <property type="component" value="Chromosome"/>
</dbReference>
<dbReference type="GO" id="GO:0005829">
    <property type="term" value="C:cytosol"/>
    <property type="evidence" value="ECO:0007669"/>
    <property type="project" value="TreeGrafter"/>
</dbReference>
<dbReference type="GO" id="GO:0005525">
    <property type="term" value="F:GTP binding"/>
    <property type="evidence" value="ECO:0007669"/>
    <property type="project" value="UniProtKB-KW"/>
</dbReference>
<dbReference type="GO" id="GO:0003924">
    <property type="term" value="F:GTPase activity"/>
    <property type="evidence" value="ECO:0007669"/>
    <property type="project" value="UniProtKB-UniRule"/>
</dbReference>
<dbReference type="GO" id="GO:0003743">
    <property type="term" value="F:translation initiation factor activity"/>
    <property type="evidence" value="ECO:0007669"/>
    <property type="project" value="UniProtKB-UniRule"/>
</dbReference>
<dbReference type="CDD" id="cd01887">
    <property type="entry name" value="IF2_eIF5B"/>
    <property type="match status" value="1"/>
</dbReference>
<dbReference type="CDD" id="cd03702">
    <property type="entry name" value="IF2_mtIF2_II"/>
    <property type="match status" value="1"/>
</dbReference>
<dbReference type="CDD" id="cd03692">
    <property type="entry name" value="mtIF2_IVc"/>
    <property type="match status" value="1"/>
</dbReference>
<dbReference type="FunFam" id="2.40.30.10:FF:000007">
    <property type="entry name" value="Translation initiation factor IF-2"/>
    <property type="match status" value="1"/>
</dbReference>
<dbReference type="FunFam" id="2.40.30.10:FF:000008">
    <property type="entry name" value="Translation initiation factor IF-2"/>
    <property type="match status" value="1"/>
</dbReference>
<dbReference type="FunFam" id="3.40.50.10050:FF:000001">
    <property type="entry name" value="Translation initiation factor IF-2"/>
    <property type="match status" value="1"/>
</dbReference>
<dbReference type="FunFam" id="3.40.50.300:FF:000019">
    <property type="entry name" value="Translation initiation factor IF-2"/>
    <property type="match status" value="1"/>
</dbReference>
<dbReference type="Gene3D" id="3.40.50.300">
    <property type="entry name" value="P-loop containing nucleotide triphosphate hydrolases"/>
    <property type="match status" value="1"/>
</dbReference>
<dbReference type="Gene3D" id="2.40.30.10">
    <property type="entry name" value="Translation factors"/>
    <property type="match status" value="2"/>
</dbReference>
<dbReference type="Gene3D" id="3.40.50.10050">
    <property type="entry name" value="Translation initiation factor IF- 2, domain 3"/>
    <property type="match status" value="1"/>
</dbReference>
<dbReference type="HAMAP" id="MF_00100_B">
    <property type="entry name" value="IF_2_B"/>
    <property type="match status" value="1"/>
</dbReference>
<dbReference type="InterPro" id="IPR053905">
    <property type="entry name" value="EF-G-like_DII"/>
</dbReference>
<dbReference type="InterPro" id="IPR013575">
    <property type="entry name" value="IF2_assoc_dom_bac"/>
</dbReference>
<dbReference type="InterPro" id="IPR044145">
    <property type="entry name" value="IF2_II"/>
</dbReference>
<dbReference type="InterPro" id="IPR006847">
    <property type="entry name" value="IF2_N"/>
</dbReference>
<dbReference type="InterPro" id="IPR027417">
    <property type="entry name" value="P-loop_NTPase"/>
</dbReference>
<dbReference type="InterPro" id="IPR005225">
    <property type="entry name" value="Small_GTP-bd"/>
</dbReference>
<dbReference type="InterPro" id="IPR000795">
    <property type="entry name" value="T_Tr_GTP-bd_dom"/>
</dbReference>
<dbReference type="InterPro" id="IPR000178">
    <property type="entry name" value="TF_IF2_bacterial-like"/>
</dbReference>
<dbReference type="InterPro" id="IPR015760">
    <property type="entry name" value="TIF_IF2"/>
</dbReference>
<dbReference type="InterPro" id="IPR023115">
    <property type="entry name" value="TIF_IF2_dom3"/>
</dbReference>
<dbReference type="InterPro" id="IPR036925">
    <property type="entry name" value="TIF_IF2_dom3_sf"/>
</dbReference>
<dbReference type="InterPro" id="IPR009000">
    <property type="entry name" value="Transl_B-barrel_sf"/>
</dbReference>
<dbReference type="NCBIfam" id="TIGR00487">
    <property type="entry name" value="IF-2"/>
    <property type="match status" value="1"/>
</dbReference>
<dbReference type="NCBIfam" id="TIGR00231">
    <property type="entry name" value="small_GTP"/>
    <property type="match status" value="1"/>
</dbReference>
<dbReference type="PANTHER" id="PTHR43381:SF5">
    <property type="entry name" value="TR-TYPE G DOMAIN-CONTAINING PROTEIN"/>
    <property type="match status" value="1"/>
</dbReference>
<dbReference type="PANTHER" id="PTHR43381">
    <property type="entry name" value="TRANSLATION INITIATION FACTOR IF-2-RELATED"/>
    <property type="match status" value="1"/>
</dbReference>
<dbReference type="Pfam" id="PF22042">
    <property type="entry name" value="EF-G_D2"/>
    <property type="match status" value="1"/>
</dbReference>
<dbReference type="Pfam" id="PF00009">
    <property type="entry name" value="GTP_EFTU"/>
    <property type="match status" value="1"/>
</dbReference>
<dbReference type="Pfam" id="PF11987">
    <property type="entry name" value="IF-2"/>
    <property type="match status" value="1"/>
</dbReference>
<dbReference type="Pfam" id="PF08364">
    <property type="entry name" value="IF2_assoc"/>
    <property type="match status" value="1"/>
</dbReference>
<dbReference type="Pfam" id="PF04760">
    <property type="entry name" value="IF2_N"/>
    <property type="match status" value="1"/>
</dbReference>
<dbReference type="SUPFAM" id="SSF52156">
    <property type="entry name" value="Initiation factor IF2/eIF5b, domain 3"/>
    <property type="match status" value="1"/>
</dbReference>
<dbReference type="SUPFAM" id="SSF52540">
    <property type="entry name" value="P-loop containing nucleoside triphosphate hydrolases"/>
    <property type="match status" value="1"/>
</dbReference>
<dbReference type="SUPFAM" id="SSF50447">
    <property type="entry name" value="Translation proteins"/>
    <property type="match status" value="2"/>
</dbReference>
<dbReference type="PROSITE" id="PS51722">
    <property type="entry name" value="G_TR_2"/>
    <property type="match status" value="1"/>
</dbReference>
<dbReference type="PROSITE" id="PS01176">
    <property type="entry name" value="IF2"/>
    <property type="match status" value="1"/>
</dbReference>
<reference key="1">
    <citation type="journal article" date="2004" name="Nature">
        <title>Genome sequence of Silicibacter pomeroyi reveals adaptations to the marine environment.</title>
        <authorList>
            <person name="Moran M.A."/>
            <person name="Buchan A."/>
            <person name="Gonzalez J.M."/>
            <person name="Heidelberg J.F."/>
            <person name="Whitman W.B."/>
            <person name="Kiene R.P."/>
            <person name="Henriksen J.R."/>
            <person name="King G.M."/>
            <person name="Belas R."/>
            <person name="Fuqua C."/>
            <person name="Brinkac L.M."/>
            <person name="Lewis M."/>
            <person name="Johri S."/>
            <person name="Weaver B."/>
            <person name="Pai G."/>
            <person name="Eisen J.A."/>
            <person name="Rahe E."/>
            <person name="Sheldon W.M."/>
            <person name="Ye W."/>
            <person name="Miller T.R."/>
            <person name="Carlton J."/>
            <person name="Rasko D.A."/>
            <person name="Paulsen I.T."/>
            <person name="Ren Q."/>
            <person name="Daugherty S.C."/>
            <person name="DeBoy R.T."/>
            <person name="Dodson R.J."/>
            <person name="Durkin A.S."/>
            <person name="Madupu R."/>
            <person name="Nelson W.C."/>
            <person name="Sullivan S.A."/>
            <person name="Rosovitz M.J."/>
            <person name="Haft D.H."/>
            <person name="Selengut J."/>
            <person name="Ward N."/>
        </authorList>
    </citation>
    <scope>NUCLEOTIDE SEQUENCE [LARGE SCALE GENOMIC DNA]</scope>
    <source>
        <strain>ATCC 700808 / DSM 15171 / DSS-3</strain>
    </source>
</reference>
<reference key="2">
    <citation type="journal article" date="2014" name="Stand. Genomic Sci.">
        <title>An updated genome annotation for the model marine bacterium Ruegeria pomeroyi DSS-3.</title>
        <authorList>
            <person name="Rivers A.R."/>
            <person name="Smith C.B."/>
            <person name="Moran M.A."/>
        </authorList>
    </citation>
    <scope>GENOME REANNOTATION</scope>
    <source>
        <strain>ATCC 700808 / DSM 15171 / DSS-3</strain>
    </source>
</reference>
<sequence length="835" mass="90200">MSDTDGKKTLGLRGSRPGNVKQSFSHGRTKNVVVETKRKRVVVPKPGAGKPSAGGSSPAGDPSRRPAGISDAEMERRLNALKAAKARESEEAAQREAEEKARAEERERRRAEQEAKEREQREAEQRAREKAEEEERQRREAEEEAKRAAVRAAAEQEAPKAERSAERAPAAARPEGGDNARRTTDRDREREQRQTRGKGRQDGRRSGKLTLSQVTDGEGGRQKSLAAMKRKQERARQKAMGGAAEREKVIREVQLPEAIVVSELANRMAERVADVVKELMKMGMMVTQNQTIDADTAELIIEEFGHKVVRVSDSDVEDVISDIEDAEEDLKPRPPVITIMGHVDHGKTSLLDAIRDAKVVAGEAGGITQHIGAYQVKTDGGATLSFLDTPGHAAFTSMRSRGAQVTDIVVLVVAADDAVMPQTVEAINHAKAAGVPMIVAINKIDKPEANPTKVRTDLLQHEVVVEAMSGEVQDVEVSAKTGEGLDELLEAIALQAEILELKANPDRPAQGAVIEAQLDVGRGPVATVLIQKGTLRQGDIFVVGEQYGKVRALINDKGERVSEAGPSVPVEVLGLNGTPEAGDVLNVTSTEAQAREIAEYRAQVAKDKRAAAGAATTLEQLMAKAKADENVAELPILVKADVQGSAEAIVQAMEKIGNDEVRVRVLHSGVGAITETDVGLAEASGAPIMGFNVRANASARNTANQKGVEIRYYSVIYDLVDDVKAAASGLLSAEIRENFIGYANIKEVFKVSNVGKVAGCLVTEGVARRSAGVRLLRDNVVIHEGTLKTLKRFKDEVAEVQSGQECGMAFENYDDIRPGDVIEIFEREEVTRTLT</sequence>
<evidence type="ECO:0000250" key="1"/>
<evidence type="ECO:0000255" key="2">
    <source>
        <dbReference type="HAMAP-Rule" id="MF_00100"/>
    </source>
</evidence>
<evidence type="ECO:0000256" key="3">
    <source>
        <dbReference type="SAM" id="MobiDB-lite"/>
    </source>
</evidence>
<accession>Q5LWL4</accession>
<proteinExistence type="inferred from homology"/>
<protein>
    <recommendedName>
        <fullName evidence="2">Translation initiation factor IF-2</fullName>
    </recommendedName>
</protein>
<name>IF2_RUEPO</name>
<feature type="chain" id="PRO_0000228244" description="Translation initiation factor IF-2">
    <location>
        <begin position="1"/>
        <end position="835"/>
    </location>
</feature>
<feature type="domain" description="tr-type G">
    <location>
        <begin position="332"/>
        <end position="500"/>
    </location>
</feature>
<feature type="region of interest" description="Disordered" evidence="3">
    <location>
        <begin position="1"/>
        <end position="243"/>
    </location>
</feature>
<feature type="region of interest" description="G1" evidence="1">
    <location>
        <begin position="341"/>
        <end position="348"/>
    </location>
</feature>
<feature type="region of interest" description="G2" evidence="1">
    <location>
        <begin position="366"/>
        <end position="370"/>
    </location>
</feature>
<feature type="region of interest" description="G3" evidence="1">
    <location>
        <begin position="388"/>
        <end position="391"/>
    </location>
</feature>
<feature type="region of interest" description="G4" evidence="1">
    <location>
        <begin position="442"/>
        <end position="445"/>
    </location>
</feature>
<feature type="region of interest" description="G5" evidence="1">
    <location>
        <begin position="478"/>
        <end position="480"/>
    </location>
</feature>
<feature type="compositionally biased region" description="Low complexity" evidence="3">
    <location>
        <begin position="43"/>
        <end position="67"/>
    </location>
</feature>
<feature type="compositionally biased region" description="Basic and acidic residues" evidence="3">
    <location>
        <begin position="85"/>
        <end position="147"/>
    </location>
</feature>
<feature type="compositionally biased region" description="Basic and acidic residues" evidence="3">
    <location>
        <begin position="157"/>
        <end position="166"/>
    </location>
</feature>
<feature type="compositionally biased region" description="Basic and acidic residues" evidence="3">
    <location>
        <begin position="175"/>
        <end position="205"/>
    </location>
</feature>
<feature type="binding site" evidence="2">
    <location>
        <begin position="341"/>
        <end position="348"/>
    </location>
    <ligand>
        <name>GTP</name>
        <dbReference type="ChEBI" id="CHEBI:37565"/>
    </ligand>
</feature>
<feature type="binding site" evidence="2">
    <location>
        <begin position="388"/>
        <end position="392"/>
    </location>
    <ligand>
        <name>GTP</name>
        <dbReference type="ChEBI" id="CHEBI:37565"/>
    </ligand>
</feature>
<feature type="binding site" evidence="2">
    <location>
        <begin position="442"/>
        <end position="445"/>
    </location>
    <ligand>
        <name>GTP</name>
        <dbReference type="ChEBI" id="CHEBI:37565"/>
    </ligand>
</feature>
<comment type="function">
    <text evidence="2">One of the essential components for the initiation of protein synthesis. Protects formylmethionyl-tRNA from spontaneous hydrolysis and promotes its binding to the 30S ribosomal subunits. Also involved in the hydrolysis of GTP during the formation of the 70S ribosomal complex.</text>
</comment>
<comment type="subcellular location">
    <subcellularLocation>
        <location evidence="2">Cytoplasm</location>
    </subcellularLocation>
</comment>
<comment type="similarity">
    <text evidence="2">Belongs to the TRAFAC class translation factor GTPase superfamily. Classic translation factor GTPase family. IF-2 subfamily.</text>
</comment>
<keyword id="KW-0963">Cytoplasm</keyword>
<keyword id="KW-0342">GTP-binding</keyword>
<keyword id="KW-0396">Initiation factor</keyword>
<keyword id="KW-0547">Nucleotide-binding</keyword>
<keyword id="KW-0648">Protein biosynthesis</keyword>
<keyword id="KW-1185">Reference proteome</keyword>
<gene>
    <name evidence="2" type="primary">infB</name>
    <name type="ordered locus">SPO0061</name>
</gene>